<reference key="1">
    <citation type="journal article" date="1994" name="Science">
        <title>Complete nucleotide sequence of Saccharomyces cerevisiae chromosome VIII.</title>
        <authorList>
            <person name="Johnston M."/>
            <person name="Andrews S."/>
            <person name="Brinkman R."/>
            <person name="Cooper J."/>
            <person name="Ding H."/>
            <person name="Dover J."/>
            <person name="Du Z."/>
            <person name="Favello A."/>
            <person name="Fulton L."/>
            <person name="Gattung S."/>
            <person name="Geisel C."/>
            <person name="Kirsten J."/>
            <person name="Kucaba T."/>
            <person name="Hillier L.W."/>
            <person name="Jier M."/>
            <person name="Johnston L."/>
            <person name="Langston Y."/>
            <person name="Latreille P."/>
            <person name="Louis E.J."/>
            <person name="Macri C."/>
            <person name="Mardis E."/>
            <person name="Menezes S."/>
            <person name="Mouser L."/>
            <person name="Nhan M."/>
            <person name="Rifkin L."/>
            <person name="Riles L."/>
            <person name="St Peter H."/>
            <person name="Trevaskis E."/>
            <person name="Vaughan K."/>
            <person name="Vignati D."/>
            <person name="Wilcox L."/>
            <person name="Wohldman P."/>
            <person name="Waterston R."/>
            <person name="Wilson R."/>
            <person name="Vaudin M."/>
        </authorList>
    </citation>
    <scope>NUCLEOTIDE SEQUENCE [LARGE SCALE GENOMIC DNA]</scope>
    <source>
        <strain>ATCC 204508 / S288c</strain>
    </source>
</reference>
<reference key="2">
    <citation type="journal article" date="2014" name="G3 (Bethesda)">
        <title>The reference genome sequence of Saccharomyces cerevisiae: Then and now.</title>
        <authorList>
            <person name="Engel S.R."/>
            <person name="Dietrich F.S."/>
            <person name="Fisk D.G."/>
            <person name="Binkley G."/>
            <person name="Balakrishnan R."/>
            <person name="Costanzo M.C."/>
            <person name="Dwight S.S."/>
            <person name="Hitz B.C."/>
            <person name="Karra K."/>
            <person name="Nash R.S."/>
            <person name="Weng S."/>
            <person name="Wong E.D."/>
            <person name="Lloyd P."/>
            <person name="Skrzypek M.S."/>
            <person name="Miyasato S.R."/>
            <person name="Simison M."/>
            <person name="Cherry J.M."/>
        </authorList>
    </citation>
    <scope>GENOME REANNOTATION</scope>
    <scope>SEQUENCE REVISION TO 123</scope>
    <source>
        <strain>ATCC 204508 / S288c</strain>
    </source>
</reference>
<name>YHD7_YEAST</name>
<comment type="subcellular location">
    <subcellularLocation>
        <location evidence="2">Secreted</location>
    </subcellularLocation>
</comment>
<comment type="sequence caution" evidence="2">
    <conflict type="frameshift">
        <sequence resource="EMBL-CDS" id="AAB65049"/>
    </conflict>
</comment>
<organism>
    <name type="scientific">Saccharomyces cerevisiae (strain ATCC 204508 / S288c)</name>
    <name type="common">Baker's yeast</name>
    <dbReference type="NCBI Taxonomy" id="559292"/>
    <lineage>
        <taxon>Eukaryota</taxon>
        <taxon>Fungi</taxon>
        <taxon>Dikarya</taxon>
        <taxon>Ascomycota</taxon>
        <taxon>Saccharomycotina</taxon>
        <taxon>Saccharomycetes</taxon>
        <taxon>Saccharomycetales</taxon>
        <taxon>Saccharomycetaceae</taxon>
        <taxon>Saccharomyces</taxon>
    </lineage>
</organism>
<sequence>MYRSSISIQVFICVLFLPLDSGRPLIYMIDLSYICSDATVFSGKSRVIFFSNPICEHTRGNFYLFYLNYIINTFAPKNRGTRRCKPFGLHINCRKKIDCLHVQLSYILCKNKSRKRHMDAHAITLAWLAHALT</sequence>
<proteinExistence type="inferred from homology"/>
<keyword id="KW-0325">Glycoprotein</keyword>
<keyword id="KW-1185">Reference proteome</keyword>
<keyword id="KW-0964">Secreted</keyword>
<keyword id="KW-0732">Signal</keyword>
<evidence type="ECO:0000255" key="1"/>
<evidence type="ECO:0000305" key="2"/>
<dbReference type="EMBL" id="U11583">
    <property type="protein sequence ID" value="AAB65049.1"/>
    <property type="status" value="ALT_FRAME"/>
    <property type="molecule type" value="Genomic_DNA"/>
</dbReference>
<dbReference type="EMBL" id="BK006934">
    <property type="protein sequence ID" value="DAA80257.1"/>
    <property type="molecule type" value="Genomic_DNA"/>
</dbReference>
<dbReference type="PIR" id="S48931">
    <property type="entry name" value="S48931"/>
</dbReference>
<dbReference type="RefSeq" id="NP_001335737.1">
    <property type="nucleotide sequence ID" value="NM_001348812.1"/>
</dbReference>
<dbReference type="FunCoup" id="P38733">
    <property type="interactions" value="23"/>
</dbReference>
<dbReference type="GlyGen" id="P38733">
    <property type="glycosylation" value="1 site"/>
</dbReference>
<dbReference type="PaxDb" id="4932-YHL037C"/>
<dbReference type="EnsemblFungi" id="YHL037C_mRNA">
    <property type="protein sequence ID" value="YHL037C"/>
    <property type="gene ID" value="YHL037C"/>
</dbReference>
<dbReference type="GeneID" id="856348"/>
<dbReference type="AGR" id="SGD:S000001029"/>
<dbReference type="SGD" id="S000001029">
    <property type="gene designation" value="YHL037C"/>
</dbReference>
<dbReference type="HOGENOM" id="CLU_1908322_0_0_1"/>
<dbReference type="InParanoid" id="P38733"/>
<dbReference type="OrthoDB" id="10282863at2759"/>
<dbReference type="PRO" id="PR:P38733"/>
<dbReference type="Proteomes" id="UP000002311">
    <property type="component" value="Chromosome VIII"/>
</dbReference>
<dbReference type="RNAct" id="P38733">
    <property type="molecule type" value="protein"/>
</dbReference>
<dbReference type="GO" id="GO:0005576">
    <property type="term" value="C:extracellular region"/>
    <property type="evidence" value="ECO:0007669"/>
    <property type="project" value="UniProtKB-SubCell"/>
</dbReference>
<accession>P38733</accession>
<accession>A0A1S0SZW7</accession>
<protein>
    <recommendedName>
        <fullName>Uncharacterized protein YHL037C</fullName>
    </recommendedName>
</protein>
<feature type="signal peptide" evidence="1">
    <location>
        <begin position="1"/>
        <end position="22"/>
    </location>
</feature>
<feature type="chain" id="PRO_0000202880" description="Uncharacterized protein YHL037C">
    <location>
        <begin position="23"/>
        <end position="133"/>
    </location>
</feature>
<feature type="glycosylation site" description="N-linked (GlcNAc...) asparagine" evidence="1">
    <location>
        <position position="111"/>
    </location>
</feature>
<gene>
    <name type="ordered locus">YHL037C</name>
</gene>